<organism>
    <name type="scientific">Homo sapiens</name>
    <name type="common">Human</name>
    <dbReference type="NCBI Taxonomy" id="9606"/>
    <lineage>
        <taxon>Eukaryota</taxon>
        <taxon>Metazoa</taxon>
        <taxon>Chordata</taxon>
        <taxon>Craniata</taxon>
        <taxon>Vertebrata</taxon>
        <taxon>Euteleostomi</taxon>
        <taxon>Mammalia</taxon>
        <taxon>Eutheria</taxon>
        <taxon>Euarchontoglires</taxon>
        <taxon>Primates</taxon>
        <taxon>Haplorrhini</taxon>
        <taxon>Catarrhini</taxon>
        <taxon>Hominidae</taxon>
        <taxon>Homo</taxon>
    </lineage>
</organism>
<proteinExistence type="evidence at protein level"/>
<reference key="1">
    <citation type="journal article" date="2007" name="BMC Genomics">
        <title>The full-ORF clone resource of the German cDNA consortium.</title>
        <authorList>
            <person name="Bechtel S."/>
            <person name="Rosenfelder H."/>
            <person name="Duda A."/>
            <person name="Schmidt C.P."/>
            <person name="Ernst U."/>
            <person name="Wellenreuther R."/>
            <person name="Mehrle A."/>
            <person name="Schuster C."/>
            <person name="Bahr A."/>
            <person name="Bloecker H."/>
            <person name="Heubner D."/>
            <person name="Hoerlein A."/>
            <person name="Michel G."/>
            <person name="Wedler H."/>
            <person name="Koehrer K."/>
            <person name="Ottenwaelder B."/>
            <person name="Poustka A."/>
            <person name="Wiemann S."/>
            <person name="Schupp I."/>
        </authorList>
    </citation>
    <scope>NUCLEOTIDE SEQUENCE [LARGE SCALE MRNA]</scope>
    <source>
        <tissue>Colon</tissue>
    </source>
</reference>
<reference key="2">
    <citation type="journal article" date="2003" name="Nature">
        <title>The DNA sequence of human chromosome 7.</title>
        <authorList>
            <person name="Hillier L.W."/>
            <person name="Fulton R.S."/>
            <person name="Fulton L.A."/>
            <person name="Graves T.A."/>
            <person name="Pepin K.H."/>
            <person name="Wagner-McPherson C."/>
            <person name="Layman D."/>
            <person name="Maas J."/>
            <person name="Jaeger S."/>
            <person name="Walker R."/>
            <person name="Wylie K."/>
            <person name="Sekhon M."/>
            <person name="Becker M.C."/>
            <person name="O'Laughlin M.D."/>
            <person name="Schaller M.E."/>
            <person name="Fewell G.A."/>
            <person name="Delehaunty K.D."/>
            <person name="Miner T.L."/>
            <person name="Nash W.E."/>
            <person name="Cordes M."/>
            <person name="Du H."/>
            <person name="Sun H."/>
            <person name="Edwards J."/>
            <person name="Bradshaw-Cordum H."/>
            <person name="Ali J."/>
            <person name="Andrews S."/>
            <person name="Isak A."/>
            <person name="Vanbrunt A."/>
            <person name="Nguyen C."/>
            <person name="Du F."/>
            <person name="Lamar B."/>
            <person name="Courtney L."/>
            <person name="Kalicki J."/>
            <person name="Ozersky P."/>
            <person name="Bielicki L."/>
            <person name="Scott K."/>
            <person name="Holmes A."/>
            <person name="Harkins R."/>
            <person name="Harris A."/>
            <person name="Strong C.M."/>
            <person name="Hou S."/>
            <person name="Tomlinson C."/>
            <person name="Dauphin-Kohlberg S."/>
            <person name="Kozlowicz-Reilly A."/>
            <person name="Leonard S."/>
            <person name="Rohlfing T."/>
            <person name="Rock S.M."/>
            <person name="Tin-Wollam A.-M."/>
            <person name="Abbott A."/>
            <person name="Minx P."/>
            <person name="Maupin R."/>
            <person name="Strowmatt C."/>
            <person name="Latreille P."/>
            <person name="Miller N."/>
            <person name="Johnson D."/>
            <person name="Murray J."/>
            <person name="Woessner J.P."/>
            <person name="Wendl M.C."/>
            <person name="Yang S.-P."/>
            <person name="Schultz B.R."/>
            <person name="Wallis J.W."/>
            <person name="Spieth J."/>
            <person name="Bieri T.A."/>
            <person name="Nelson J.O."/>
            <person name="Berkowicz N."/>
            <person name="Wohldmann P.E."/>
            <person name="Cook L.L."/>
            <person name="Hickenbotham M.T."/>
            <person name="Eldred J."/>
            <person name="Williams D."/>
            <person name="Bedell J.A."/>
            <person name="Mardis E.R."/>
            <person name="Clifton S.W."/>
            <person name="Chissoe S.L."/>
            <person name="Marra M.A."/>
            <person name="Raymond C."/>
            <person name="Haugen E."/>
            <person name="Gillett W."/>
            <person name="Zhou Y."/>
            <person name="James R."/>
            <person name="Phelps K."/>
            <person name="Iadanoto S."/>
            <person name="Bubb K."/>
            <person name="Simms E."/>
            <person name="Levy R."/>
            <person name="Clendenning J."/>
            <person name="Kaul R."/>
            <person name="Kent W.J."/>
            <person name="Furey T.S."/>
            <person name="Baertsch R.A."/>
            <person name="Brent M.R."/>
            <person name="Keibler E."/>
            <person name="Flicek P."/>
            <person name="Bork P."/>
            <person name="Suyama M."/>
            <person name="Bailey J.A."/>
            <person name="Portnoy M.E."/>
            <person name="Torrents D."/>
            <person name="Chinwalla A.T."/>
            <person name="Gish W.R."/>
            <person name="Eddy S.R."/>
            <person name="McPherson J.D."/>
            <person name="Olson M.V."/>
            <person name="Eichler E.E."/>
            <person name="Green E.D."/>
            <person name="Waterston R.H."/>
            <person name="Wilson R.K."/>
        </authorList>
    </citation>
    <scope>NUCLEOTIDE SEQUENCE [LARGE SCALE GENOMIC DNA]</scope>
</reference>
<reference key="3">
    <citation type="journal article" date="2003" name="Science">
        <title>Human chromosome 7: DNA sequence and biology.</title>
        <authorList>
            <person name="Scherer S.W."/>
            <person name="Cheung J."/>
            <person name="MacDonald J.R."/>
            <person name="Osborne L.R."/>
            <person name="Nakabayashi K."/>
            <person name="Herbrick J.-A."/>
            <person name="Carson A.R."/>
            <person name="Parker-Katiraee L."/>
            <person name="Skaug J."/>
            <person name="Khaja R."/>
            <person name="Zhang J."/>
            <person name="Hudek A.K."/>
            <person name="Li M."/>
            <person name="Haddad M."/>
            <person name="Duggan G.E."/>
            <person name="Fernandez B.A."/>
            <person name="Kanematsu E."/>
            <person name="Gentles S."/>
            <person name="Christopoulos C.C."/>
            <person name="Choufani S."/>
            <person name="Kwasnicka D."/>
            <person name="Zheng X.H."/>
            <person name="Lai Z."/>
            <person name="Nusskern D.R."/>
            <person name="Zhang Q."/>
            <person name="Gu Z."/>
            <person name="Lu F."/>
            <person name="Zeesman S."/>
            <person name="Nowaczyk M.J."/>
            <person name="Teshima I."/>
            <person name="Chitayat D."/>
            <person name="Shuman C."/>
            <person name="Weksberg R."/>
            <person name="Zackai E.H."/>
            <person name="Grebe T.A."/>
            <person name="Cox S.R."/>
            <person name="Kirkpatrick S.J."/>
            <person name="Rahman N."/>
            <person name="Friedman J.M."/>
            <person name="Heng H.H.Q."/>
            <person name="Pelicci P.G."/>
            <person name="Lo-Coco F."/>
            <person name="Belloni E."/>
            <person name="Shaffer L.G."/>
            <person name="Pober B."/>
            <person name="Morton C.C."/>
            <person name="Gusella J.F."/>
            <person name="Bruns G.A.P."/>
            <person name="Korf B.R."/>
            <person name="Quade B.J."/>
            <person name="Ligon A.H."/>
            <person name="Ferguson H."/>
            <person name="Higgins A.W."/>
            <person name="Leach N.T."/>
            <person name="Herrick S.R."/>
            <person name="Lemyre E."/>
            <person name="Farra C.G."/>
            <person name="Kim H.-G."/>
            <person name="Summers A.M."/>
            <person name="Gripp K.W."/>
            <person name="Roberts W."/>
            <person name="Szatmari P."/>
            <person name="Winsor E.J.T."/>
            <person name="Grzeschik K.-H."/>
            <person name="Teebi A."/>
            <person name="Minassian B.A."/>
            <person name="Kere J."/>
            <person name="Armengol L."/>
            <person name="Pujana M.A."/>
            <person name="Estivill X."/>
            <person name="Wilson M.D."/>
            <person name="Koop B.F."/>
            <person name="Tosi S."/>
            <person name="Moore G.E."/>
            <person name="Boright A.P."/>
            <person name="Zlotorynski E."/>
            <person name="Kerem B."/>
            <person name="Kroisel P.M."/>
            <person name="Petek E."/>
            <person name="Oscier D.G."/>
            <person name="Mould S.J."/>
            <person name="Doehner H."/>
            <person name="Doehner K."/>
            <person name="Rommens J.M."/>
            <person name="Vincent J.B."/>
            <person name="Venter J.C."/>
            <person name="Li P.W."/>
            <person name="Mural R.J."/>
            <person name="Adams M.D."/>
            <person name="Tsui L.-C."/>
        </authorList>
    </citation>
    <scope>NUCLEOTIDE SEQUENCE [LARGE SCALE GENOMIC DNA]</scope>
</reference>
<reference key="4">
    <citation type="journal article" date="2004" name="Genome Res.">
        <title>The status, quality, and expansion of the NIH full-length cDNA project: the Mammalian Gene Collection (MGC).</title>
        <authorList>
            <consortium name="The MGC Project Team"/>
        </authorList>
    </citation>
    <scope>NUCLEOTIDE SEQUENCE [LARGE SCALE MRNA]</scope>
    <source>
        <tissue>Skin</tissue>
    </source>
</reference>
<reference key="5">
    <citation type="journal article" date="2023" name="Sci. Adv.">
        <title>MAVI1, an endoplasmic reticulum-localized microprotein, suppresses antiviral innate immune response by targeting MAVS on mitochondrion.</title>
        <authorList>
            <person name="Shi T.T."/>
            <person name="Huang Y."/>
            <person name="Li Y."/>
            <person name="Dai X.L."/>
            <person name="He Y.H."/>
            <person name="Ding J.C."/>
            <person name="Ran T."/>
            <person name="Shi Y."/>
            <person name="Yuan Q."/>
            <person name="Li W.J."/>
            <person name="Liu W."/>
        </authorList>
    </citation>
    <scope>FUNCTION</scope>
    <scope>INTERACTION WITH MAVS</scope>
    <scope>SUBCELLULAR LOCATION</scope>
    <scope>INDUCTION</scope>
    <scope>TOPOLOGY</scope>
</reference>
<sequence>MTSVSTQLSLVLMSLLLVLPVVEAVEAGDAIALLLGVVLSITGICACLGVYARKRNGQM</sequence>
<comment type="function">
    <text evidence="2">Negatively regulates antiviral innate immune responses (PubMed:37656786). Disrupts the interaction of antiviral protein MAVS with innate immune receptor RIGI and inhibits MAVS aggregation, resulting in the repression of type I interferon signaling and innate immune responses (PubMed:37656786).</text>
</comment>
<comment type="subunit">
    <text evidence="2">Interacts (via transmembrane domain) with antiviral protein MAVS (via transmembrane domain); the interaction disrupts MAVS interaction with RIGI and inhibits MAVS aggregation, resulting in the repression of type I interferon signaling and innate immune responses.</text>
</comment>
<comment type="subcellular location">
    <subcellularLocation>
        <location evidence="2">Endoplasmic reticulum membrane</location>
        <topology evidence="2">Single-pass type I membrane protein</topology>
    </subcellularLocation>
    <subcellularLocation>
        <location evidence="2">Mitochondrion membrane</location>
        <topology evidence="2">Single-pass type I membrane protein</topology>
    </subcellularLocation>
</comment>
<comment type="induction">
    <text evidence="2">Down-regulated following vesicular stomatitis virus (VSV) infection which releases SMIM30-mediated inhibition of the interaction between RIGI and MAVS and leads to the activation of type I interferon signaling and innate immune responses.</text>
</comment>
<dbReference type="EMBL" id="BX537645">
    <property type="status" value="NOT_ANNOTATED_CDS"/>
    <property type="molecule type" value="mRNA"/>
</dbReference>
<dbReference type="EMBL" id="AC073346">
    <property type="status" value="NOT_ANNOTATED_CDS"/>
    <property type="molecule type" value="Genomic_DNA"/>
</dbReference>
<dbReference type="EMBL" id="CH236947">
    <property type="protein sequence ID" value="EAL24371.1"/>
    <property type="molecule type" value="Genomic_DNA"/>
</dbReference>
<dbReference type="EMBL" id="BC107860">
    <property type="status" value="NOT_ANNOTATED_CDS"/>
    <property type="molecule type" value="mRNA"/>
</dbReference>
<dbReference type="CCDS" id="CCDS87543.1"/>
<dbReference type="RefSeq" id="NP_001339616.1">
    <property type="nucleotide sequence ID" value="NM_001352687.2"/>
</dbReference>
<dbReference type="RefSeq" id="NP_001339617.1">
    <property type="nucleotide sequence ID" value="NM_001352688.2"/>
</dbReference>
<dbReference type="SMR" id="A4D0T7"/>
<dbReference type="CORUM" id="A4D0T7"/>
<dbReference type="FunCoup" id="A4D0T7">
    <property type="interactions" value="11"/>
</dbReference>
<dbReference type="STRING" id="9606.ENSP00000490095"/>
<dbReference type="BioMuta" id="SMIM30"/>
<dbReference type="PeptideAtlas" id="A4D0T7"/>
<dbReference type="Ensembl" id="ENST00000397764.8">
    <property type="protein sequence ID" value="ENSP00000490095.1"/>
    <property type="gene ID" value="ENSG00000214194.9"/>
</dbReference>
<dbReference type="Ensembl" id="ENST00000441359.1">
    <property type="protein sequence ID" value="ENSP00000490064.1"/>
    <property type="gene ID" value="ENSG00000214194.9"/>
</dbReference>
<dbReference type="GeneID" id="401397"/>
<dbReference type="MANE-Select" id="ENST00000397764.8">
    <property type="protein sequence ID" value="ENSP00000490095.1"/>
    <property type="RefSeq nucleotide sequence ID" value="NM_001352688.2"/>
    <property type="RefSeq protein sequence ID" value="NP_001339617.1"/>
</dbReference>
<dbReference type="AGR" id="HGNC:48953"/>
<dbReference type="GeneCards" id="SMIM30"/>
<dbReference type="HGNC" id="HGNC:48953">
    <property type="gene designation" value="SMIM30"/>
</dbReference>
<dbReference type="HPA" id="ENSG00000214194">
    <property type="expression patterns" value="Low tissue specificity"/>
</dbReference>
<dbReference type="neXtProt" id="NX_A4D0T7"/>
<dbReference type="OpenTargets" id="ENSG00000214194"/>
<dbReference type="VEuPathDB" id="HostDB:ENSG00000214194"/>
<dbReference type="GeneTree" id="ENSGT00400000023684"/>
<dbReference type="InParanoid" id="A4D0T7"/>
<dbReference type="OMA" id="FCACLGY"/>
<dbReference type="OrthoDB" id="8646386at2759"/>
<dbReference type="PAN-GO" id="A4D0T7">
    <property type="GO annotations" value="0 GO annotations based on evolutionary models"/>
</dbReference>
<dbReference type="PhylomeDB" id="A4D0T7"/>
<dbReference type="Pharos" id="A4D0T7">
    <property type="development level" value="Tdark"/>
</dbReference>
<dbReference type="PRO" id="PR:A4D0T7"/>
<dbReference type="Proteomes" id="UP000005640">
    <property type="component" value="Chromosome 7"/>
</dbReference>
<dbReference type="RNAct" id="A4D0T7">
    <property type="molecule type" value="protein"/>
</dbReference>
<dbReference type="Bgee" id="ENSG00000214194">
    <property type="expression patterns" value="Expressed in left ventricle myocardium and 186 other cell types or tissues"/>
</dbReference>
<dbReference type="GO" id="GO:0005789">
    <property type="term" value="C:endoplasmic reticulum membrane"/>
    <property type="evidence" value="ECO:0000314"/>
    <property type="project" value="UniProtKB"/>
</dbReference>
<dbReference type="GO" id="GO:0031966">
    <property type="term" value="C:mitochondrial membrane"/>
    <property type="evidence" value="ECO:0000314"/>
    <property type="project" value="UniProtKB"/>
</dbReference>
<dbReference type="GO" id="GO:0045087">
    <property type="term" value="P:innate immune response"/>
    <property type="evidence" value="ECO:0007669"/>
    <property type="project" value="UniProtKB-KW"/>
</dbReference>
<dbReference type="GO" id="GO:0060339">
    <property type="term" value="P:negative regulation of type I interferon-mediated signaling pathway"/>
    <property type="evidence" value="ECO:0000315"/>
    <property type="project" value="UniProtKB"/>
</dbReference>
<dbReference type="InterPro" id="IPR031742">
    <property type="entry name" value="DUF4730"/>
</dbReference>
<dbReference type="PANTHER" id="PTHR36878">
    <property type="entry name" value="SMALL INTEGRAL MEMBRANE PROTEIN 30"/>
    <property type="match status" value="1"/>
</dbReference>
<dbReference type="PANTHER" id="PTHR36878:SF1">
    <property type="entry name" value="SMALL INTEGRAL MEMBRANE PROTEIN 30"/>
    <property type="match status" value="1"/>
</dbReference>
<dbReference type="Pfam" id="PF15873">
    <property type="entry name" value="DUF4730"/>
    <property type="match status" value="1"/>
</dbReference>
<evidence type="ECO:0000255" key="1"/>
<evidence type="ECO:0000269" key="2">
    <source>
    </source>
</evidence>
<evidence type="ECO:0000303" key="3">
    <source>
    </source>
</evidence>
<evidence type="ECO:0000305" key="4">
    <source>
    </source>
</evidence>
<evidence type="ECO:0000312" key="5">
    <source>
        <dbReference type="HGNC" id="HGNC:48953"/>
    </source>
</evidence>
<feature type="signal peptide" evidence="1">
    <location>
        <begin position="1"/>
        <end position="24"/>
    </location>
</feature>
<feature type="chain" id="PRO_0000349370" description="Small integral membrane protein 30">
    <location>
        <begin position="25"/>
        <end position="59"/>
    </location>
</feature>
<feature type="topological domain" description="Extracellular" evidence="4">
    <location>
        <begin position="25"/>
        <end position="29"/>
    </location>
</feature>
<feature type="transmembrane region" description="Helical" evidence="1">
    <location>
        <begin position="30"/>
        <end position="50"/>
    </location>
</feature>
<feature type="topological domain" description="Cytoplasmic" evidence="4">
    <location>
        <begin position="51"/>
        <end position="59"/>
    </location>
</feature>
<protein>
    <recommendedName>
        <fullName evidence="5">Small integral membrane protein 30</fullName>
    </recommendedName>
    <alternativeName>
        <fullName evidence="3">Microprotein in antiviral immunity 1</fullName>
    </alternativeName>
</protein>
<keyword id="KW-0256">Endoplasmic reticulum</keyword>
<keyword id="KW-0391">Immunity</keyword>
<keyword id="KW-0399">Innate immunity</keyword>
<keyword id="KW-0472">Membrane</keyword>
<keyword id="KW-0496">Mitochondrion</keyword>
<keyword id="KW-1267">Proteomics identification</keyword>
<keyword id="KW-1185">Reference proteome</keyword>
<keyword id="KW-0732">Signal</keyword>
<keyword id="KW-0812">Transmembrane</keyword>
<keyword id="KW-1133">Transmembrane helix</keyword>
<gene>
    <name evidence="5" type="primary">SMIM30</name>
    <name evidence="3" type="synonym">MAVI1</name>
</gene>
<accession>A4D0T7</accession>
<accession>Q32Q38</accession>
<name>SIM30_HUMAN</name>